<protein>
    <recommendedName>
        <fullName evidence="1">Large ribosomal subunit protein uL18</fullName>
    </recommendedName>
    <alternativeName>
        <fullName evidence="2">50S ribosomal protein L18</fullName>
    </alternativeName>
</protein>
<dbReference type="EMBL" id="AE017282">
    <property type="protein sequence ID" value="AAU91485.1"/>
    <property type="molecule type" value="Genomic_DNA"/>
</dbReference>
<dbReference type="RefSeq" id="WP_010961584.1">
    <property type="nucleotide sequence ID" value="NC_002977.6"/>
</dbReference>
<dbReference type="SMR" id="Q605C8"/>
<dbReference type="STRING" id="243233.MCA2356"/>
<dbReference type="GeneID" id="88224558"/>
<dbReference type="KEGG" id="mca:MCA2356"/>
<dbReference type="eggNOG" id="COG0256">
    <property type="taxonomic scope" value="Bacteria"/>
</dbReference>
<dbReference type="HOGENOM" id="CLU_098841_0_1_6"/>
<dbReference type="Proteomes" id="UP000006821">
    <property type="component" value="Chromosome"/>
</dbReference>
<dbReference type="GO" id="GO:0022625">
    <property type="term" value="C:cytosolic large ribosomal subunit"/>
    <property type="evidence" value="ECO:0007669"/>
    <property type="project" value="TreeGrafter"/>
</dbReference>
<dbReference type="GO" id="GO:0008097">
    <property type="term" value="F:5S rRNA binding"/>
    <property type="evidence" value="ECO:0007669"/>
    <property type="project" value="TreeGrafter"/>
</dbReference>
<dbReference type="GO" id="GO:0003735">
    <property type="term" value="F:structural constituent of ribosome"/>
    <property type="evidence" value="ECO:0007669"/>
    <property type="project" value="InterPro"/>
</dbReference>
<dbReference type="GO" id="GO:0006412">
    <property type="term" value="P:translation"/>
    <property type="evidence" value="ECO:0007669"/>
    <property type="project" value="UniProtKB-UniRule"/>
</dbReference>
<dbReference type="CDD" id="cd00432">
    <property type="entry name" value="Ribosomal_L18_L5e"/>
    <property type="match status" value="1"/>
</dbReference>
<dbReference type="FunFam" id="3.30.420.100:FF:000001">
    <property type="entry name" value="50S ribosomal protein L18"/>
    <property type="match status" value="1"/>
</dbReference>
<dbReference type="Gene3D" id="3.30.420.100">
    <property type="match status" value="1"/>
</dbReference>
<dbReference type="HAMAP" id="MF_01337_B">
    <property type="entry name" value="Ribosomal_uL18_B"/>
    <property type="match status" value="1"/>
</dbReference>
<dbReference type="InterPro" id="IPR004389">
    <property type="entry name" value="Ribosomal_uL18_bac-type"/>
</dbReference>
<dbReference type="InterPro" id="IPR005484">
    <property type="entry name" value="Ribosomal_uL18_bac/euk"/>
</dbReference>
<dbReference type="NCBIfam" id="TIGR00060">
    <property type="entry name" value="L18_bact"/>
    <property type="match status" value="1"/>
</dbReference>
<dbReference type="PANTHER" id="PTHR12899">
    <property type="entry name" value="39S RIBOSOMAL PROTEIN L18, MITOCHONDRIAL"/>
    <property type="match status" value="1"/>
</dbReference>
<dbReference type="PANTHER" id="PTHR12899:SF3">
    <property type="entry name" value="LARGE RIBOSOMAL SUBUNIT PROTEIN UL18M"/>
    <property type="match status" value="1"/>
</dbReference>
<dbReference type="Pfam" id="PF00861">
    <property type="entry name" value="Ribosomal_L18p"/>
    <property type="match status" value="1"/>
</dbReference>
<dbReference type="SUPFAM" id="SSF53137">
    <property type="entry name" value="Translational machinery components"/>
    <property type="match status" value="1"/>
</dbReference>
<comment type="function">
    <text evidence="1">This is one of the proteins that bind and probably mediate the attachment of the 5S RNA into the large ribosomal subunit, where it forms part of the central protuberance.</text>
</comment>
<comment type="subunit">
    <text evidence="1">Part of the 50S ribosomal subunit; part of the 5S rRNA/L5/L18/L25 subcomplex. Contacts the 5S and 23S rRNAs.</text>
</comment>
<comment type="similarity">
    <text evidence="1">Belongs to the universal ribosomal protein uL18 family.</text>
</comment>
<sequence length="117" mass="12560">MDKKQARLKRAAKTRHVIRAMGANRLTVHRTPRHIYAQVISPDGGTVLAAASTLESAIRETLPVTGNKDAAIAVGRRIAEKALAVGISSVAFDRSGFKYHGRVKALAEAAREAGLQF</sequence>
<keyword id="KW-1185">Reference proteome</keyword>
<keyword id="KW-0687">Ribonucleoprotein</keyword>
<keyword id="KW-0689">Ribosomal protein</keyword>
<keyword id="KW-0694">RNA-binding</keyword>
<keyword id="KW-0699">rRNA-binding</keyword>
<accession>Q605C8</accession>
<organism>
    <name type="scientific">Methylococcus capsulatus (strain ATCC 33009 / NCIMB 11132 / Bath)</name>
    <dbReference type="NCBI Taxonomy" id="243233"/>
    <lineage>
        <taxon>Bacteria</taxon>
        <taxon>Pseudomonadati</taxon>
        <taxon>Pseudomonadota</taxon>
        <taxon>Gammaproteobacteria</taxon>
        <taxon>Methylococcales</taxon>
        <taxon>Methylococcaceae</taxon>
        <taxon>Methylococcus</taxon>
    </lineage>
</organism>
<evidence type="ECO:0000255" key="1">
    <source>
        <dbReference type="HAMAP-Rule" id="MF_01337"/>
    </source>
</evidence>
<evidence type="ECO:0000305" key="2"/>
<proteinExistence type="inferred from homology"/>
<feature type="chain" id="PRO_0000131291" description="Large ribosomal subunit protein uL18">
    <location>
        <begin position="1"/>
        <end position="117"/>
    </location>
</feature>
<name>RL18_METCA</name>
<gene>
    <name evidence="1" type="primary">rplR</name>
    <name type="ordered locus">MCA2356</name>
</gene>
<reference key="1">
    <citation type="journal article" date="2004" name="PLoS Biol.">
        <title>Genomic insights into methanotrophy: the complete genome sequence of Methylococcus capsulatus (Bath).</title>
        <authorList>
            <person name="Ward N.L."/>
            <person name="Larsen O."/>
            <person name="Sakwa J."/>
            <person name="Bruseth L."/>
            <person name="Khouri H.M."/>
            <person name="Durkin A.S."/>
            <person name="Dimitrov G."/>
            <person name="Jiang L."/>
            <person name="Scanlan D."/>
            <person name="Kang K.H."/>
            <person name="Lewis M.R."/>
            <person name="Nelson K.E."/>
            <person name="Methe B.A."/>
            <person name="Wu M."/>
            <person name="Heidelberg J.F."/>
            <person name="Paulsen I.T."/>
            <person name="Fouts D.E."/>
            <person name="Ravel J."/>
            <person name="Tettelin H."/>
            <person name="Ren Q."/>
            <person name="Read T.D."/>
            <person name="DeBoy R.T."/>
            <person name="Seshadri R."/>
            <person name="Salzberg S.L."/>
            <person name="Jensen H.B."/>
            <person name="Birkeland N.K."/>
            <person name="Nelson W.C."/>
            <person name="Dodson R.J."/>
            <person name="Grindhaug S.H."/>
            <person name="Holt I.E."/>
            <person name="Eidhammer I."/>
            <person name="Jonasen I."/>
            <person name="Vanaken S."/>
            <person name="Utterback T.R."/>
            <person name="Feldblyum T.V."/>
            <person name="Fraser C.M."/>
            <person name="Lillehaug J.R."/>
            <person name="Eisen J.A."/>
        </authorList>
    </citation>
    <scope>NUCLEOTIDE SEQUENCE [LARGE SCALE GENOMIC DNA]</scope>
    <source>
        <strain>ATCC 33009 / NCIMB 11132 / Bath</strain>
    </source>
</reference>